<feature type="chain" id="PRO_0000263963" description="Argininosuccinate synthase">
    <location>
        <begin position="1"/>
        <end position="408"/>
    </location>
</feature>
<feature type="binding site" evidence="1">
    <location>
        <begin position="10"/>
        <end position="18"/>
    </location>
    <ligand>
        <name>ATP</name>
        <dbReference type="ChEBI" id="CHEBI:30616"/>
    </ligand>
</feature>
<feature type="binding site" evidence="1">
    <location>
        <position position="37"/>
    </location>
    <ligand>
        <name>ATP</name>
        <dbReference type="ChEBI" id="CHEBI:30616"/>
    </ligand>
</feature>
<feature type="binding site" evidence="1">
    <location>
        <position position="90"/>
    </location>
    <ligand>
        <name>L-citrulline</name>
        <dbReference type="ChEBI" id="CHEBI:57743"/>
    </ligand>
</feature>
<feature type="binding site" evidence="1">
    <location>
        <position position="95"/>
    </location>
    <ligand>
        <name>L-citrulline</name>
        <dbReference type="ChEBI" id="CHEBI:57743"/>
    </ligand>
</feature>
<feature type="binding site" evidence="1">
    <location>
        <position position="120"/>
    </location>
    <ligand>
        <name>ATP</name>
        <dbReference type="ChEBI" id="CHEBI:30616"/>
    </ligand>
</feature>
<feature type="binding site" evidence="1">
    <location>
        <position position="122"/>
    </location>
    <ligand>
        <name>L-aspartate</name>
        <dbReference type="ChEBI" id="CHEBI:29991"/>
    </ligand>
</feature>
<feature type="binding site" evidence="1">
    <location>
        <position position="126"/>
    </location>
    <ligand>
        <name>L-aspartate</name>
        <dbReference type="ChEBI" id="CHEBI:29991"/>
    </ligand>
</feature>
<feature type="binding site" evidence="1">
    <location>
        <position position="126"/>
    </location>
    <ligand>
        <name>L-citrulline</name>
        <dbReference type="ChEBI" id="CHEBI:57743"/>
    </ligand>
</feature>
<feature type="binding site" evidence="1">
    <location>
        <position position="127"/>
    </location>
    <ligand>
        <name>L-aspartate</name>
        <dbReference type="ChEBI" id="CHEBI:29991"/>
    </ligand>
</feature>
<feature type="binding site" evidence="1">
    <location>
        <position position="130"/>
    </location>
    <ligand>
        <name>L-citrulline</name>
        <dbReference type="ChEBI" id="CHEBI:57743"/>
    </ligand>
</feature>
<feature type="binding site" evidence="1">
    <location>
        <position position="181"/>
    </location>
    <ligand>
        <name>L-citrulline</name>
        <dbReference type="ChEBI" id="CHEBI:57743"/>
    </ligand>
</feature>
<feature type="binding site" evidence="1">
    <location>
        <position position="190"/>
    </location>
    <ligand>
        <name>L-citrulline</name>
        <dbReference type="ChEBI" id="CHEBI:57743"/>
    </ligand>
</feature>
<feature type="binding site" evidence="1">
    <location>
        <position position="266"/>
    </location>
    <ligand>
        <name>L-citrulline</name>
        <dbReference type="ChEBI" id="CHEBI:57743"/>
    </ligand>
</feature>
<feature type="binding site" evidence="1">
    <location>
        <position position="278"/>
    </location>
    <ligand>
        <name>L-citrulline</name>
        <dbReference type="ChEBI" id="CHEBI:57743"/>
    </ligand>
</feature>
<proteinExistence type="inferred from homology"/>
<comment type="catalytic activity">
    <reaction evidence="1">
        <text>L-citrulline + L-aspartate + ATP = 2-(N(omega)-L-arginino)succinate + AMP + diphosphate + H(+)</text>
        <dbReference type="Rhea" id="RHEA:10932"/>
        <dbReference type="ChEBI" id="CHEBI:15378"/>
        <dbReference type="ChEBI" id="CHEBI:29991"/>
        <dbReference type="ChEBI" id="CHEBI:30616"/>
        <dbReference type="ChEBI" id="CHEBI:33019"/>
        <dbReference type="ChEBI" id="CHEBI:57472"/>
        <dbReference type="ChEBI" id="CHEBI:57743"/>
        <dbReference type="ChEBI" id="CHEBI:456215"/>
        <dbReference type="EC" id="6.3.4.5"/>
    </reaction>
</comment>
<comment type="pathway">
    <text evidence="1">Amino-acid biosynthesis; L-arginine biosynthesis; L-arginine from L-ornithine and carbamoyl phosphate: step 2/3.</text>
</comment>
<comment type="subunit">
    <text evidence="1">Homotetramer.</text>
</comment>
<comment type="subcellular location">
    <subcellularLocation>
        <location evidence="1">Cytoplasm</location>
    </subcellularLocation>
</comment>
<comment type="similarity">
    <text evidence="1">Belongs to the argininosuccinate synthase family. Type 1 subfamily.</text>
</comment>
<organism>
    <name type="scientific">Cereibacter sphaeroides (strain ATCC 17023 / DSM 158 / JCM 6121 / CCUG 31486 / LMG 2827 / NBRC 12203 / NCIMB 8253 / ATH 2.4.1.)</name>
    <name type="common">Rhodobacter sphaeroides</name>
    <dbReference type="NCBI Taxonomy" id="272943"/>
    <lineage>
        <taxon>Bacteria</taxon>
        <taxon>Pseudomonadati</taxon>
        <taxon>Pseudomonadota</taxon>
        <taxon>Alphaproteobacteria</taxon>
        <taxon>Rhodobacterales</taxon>
        <taxon>Paracoccaceae</taxon>
        <taxon>Cereibacter</taxon>
    </lineage>
</organism>
<accession>Q3IYJ1</accession>
<keyword id="KW-0028">Amino-acid biosynthesis</keyword>
<keyword id="KW-0055">Arginine biosynthesis</keyword>
<keyword id="KW-0067">ATP-binding</keyword>
<keyword id="KW-0963">Cytoplasm</keyword>
<keyword id="KW-0436">Ligase</keyword>
<keyword id="KW-0547">Nucleotide-binding</keyword>
<keyword id="KW-1185">Reference proteome</keyword>
<reference key="1">
    <citation type="submission" date="2005-09" db="EMBL/GenBank/DDBJ databases">
        <title>Complete sequence of chromosome 1 of Rhodobacter sphaeroides 2.4.1.</title>
        <authorList>
            <person name="Copeland A."/>
            <person name="Lucas S."/>
            <person name="Lapidus A."/>
            <person name="Barry K."/>
            <person name="Detter J.C."/>
            <person name="Glavina T."/>
            <person name="Hammon N."/>
            <person name="Israni S."/>
            <person name="Pitluck S."/>
            <person name="Richardson P."/>
            <person name="Mackenzie C."/>
            <person name="Choudhary M."/>
            <person name="Larimer F."/>
            <person name="Hauser L.J."/>
            <person name="Land M."/>
            <person name="Donohue T.J."/>
            <person name="Kaplan S."/>
        </authorList>
    </citation>
    <scope>NUCLEOTIDE SEQUENCE [LARGE SCALE GENOMIC DNA]</scope>
    <source>
        <strain>ATCC 17023 / DSM 158 / JCM 6121 / CCUG 31486 / LMG 2827 / NBRC 12203 / NCIMB 8253 / ATH 2.4.1.</strain>
    </source>
</reference>
<evidence type="ECO:0000255" key="1">
    <source>
        <dbReference type="HAMAP-Rule" id="MF_00005"/>
    </source>
</evidence>
<gene>
    <name evidence="1" type="primary">argG</name>
    <name type="ordered locus">RHOS4_28250</name>
    <name type="ORF">RSP_1212</name>
</gene>
<name>ASSY_CERS4</name>
<protein>
    <recommendedName>
        <fullName evidence="1">Argininosuccinate synthase</fullName>
        <ecNumber evidence="1">6.3.4.5</ecNumber>
    </recommendedName>
    <alternativeName>
        <fullName evidence="1">Citrulline--aspartate ligase</fullName>
    </alternativeName>
</protein>
<dbReference type="EC" id="6.3.4.5" evidence="1"/>
<dbReference type="EMBL" id="CP000143">
    <property type="protein sequence ID" value="ABA80393.1"/>
    <property type="molecule type" value="Genomic_DNA"/>
</dbReference>
<dbReference type="RefSeq" id="WP_002721701.1">
    <property type="nucleotide sequence ID" value="NZ_CP030271.1"/>
</dbReference>
<dbReference type="RefSeq" id="YP_354294.1">
    <property type="nucleotide sequence ID" value="NC_007493.2"/>
</dbReference>
<dbReference type="SMR" id="Q3IYJ1"/>
<dbReference type="STRING" id="272943.RSP_1212"/>
<dbReference type="EnsemblBacteria" id="ABA80393">
    <property type="protein sequence ID" value="ABA80393"/>
    <property type="gene ID" value="RSP_1212"/>
</dbReference>
<dbReference type="KEGG" id="rsp:RSP_1212"/>
<dbReference type="PATRIC" id="fig|272943.9.peg.3193"/>
<dbReference type="eggNOG" id="COG0137">
    <property type="taxonomic scope" value="Bacteria"/>
</dbReference>
<dbReference type="OrthoDB" id="9801641at2"/>
<dbReference type="PhylomeDB" id="Q3IYJ1"/>
<dbReference type="UniPathway" id="UPA00068">
    <property type="reaction ID" value="UER00113"/>
</dbReference>
<dbReference type="Proteomes" id="UP000002703">
    <property type="component" value="Chromosome 1"/>
</dbReference>
<dbReference type="GO" id="GO:0005737">
    <property type="term" value="C:cytoplasm"/>
    <property type="evidence" value="ECO:0007669"/>
    <property type="project" value="UniProtKB-SubCell"/>
</dbReference>
<dbReference type="GO" id="GO:0004055">
    <property type="term" value="F:argininosuccinate synthase activity"/>
    <property type="evidence" value="ECO:0007669"/>
    <property type="project" value="UniProtKB-UniRule"/>
</dbReference>
<dbReference type="GO" id="GO:0005524">
    <property type="term" value="F:ATP binding"/>
    <property type="evidence" value="ECO:0007669"/>
    <property type="project" value="UniProtKB-UniRule"/>
</dbReference>
<dbReference type="GO" id="GO:0000053">
    <property type="term" value="P:argininosuccinate metabolic process"/>
    <property type="evidence" value="ECO:0007669"/>
    <property type="project" value="TreeGrafter"/>
</dbReference>
<dbReference type="GO" id="GO:0006526">
    <property type="term" value="P:L-arginine biosynthetic process"/>
    <property type="evidence" value="ECO:0007669"/>
    <property type="project" value="UniProtKB-UniRule"/>
</dbReference>
<dbReference type="GO" id="GO:0000050">
    <property type="term" value="P:urea cycle"/>
    <property type="evidence" value="ECO:0007669"/>
    <property type="project" value="TreeGrafter"/>
</dbReference>
<dbReference type="CDD" id="cd01999">
    <property type="entry name" value="ASS"/>
    <property type="match status" value="1"/>
</dbReference>
<dbReference type="FunFam" id="3.40.50.620:FF:000019">
    <property type="entry name" value="Argininosuccinate synthase"/>
    <property type="match status" value="1"/>
</dbReference>
<dbReference type="FunFam" id="3.90.1260.10:FF:000007">
    <property type="entry name" value="Argininosuccinate synthase"/>
    <property type="match status" value="1"/>
</dbReference>
<dbReference type="Gene3D" id="3.90.1260.10">
    <property type="entry name" value="Argininosuccinate synthetase, chain A, domain 2"/>
    <property type="match status" value="1"/>
</dbReference>
<dbReference type="Gene3D" id="3.40.50.620">
    <property type="entry name" value="HUPs"/>
    <property type="match status" value="1"/>
</dbReference>
<dbReference type="Gene3D" id="1.20.5.470">
    <property type="entry name" value="Single helix bin"/>
    <property type="match status" value="1"/>
</dbReference>
<dbReference type="HAMAP" id="MF_00005">
    <property type="entry name" value="Arg_succ_synth_type1"/>
    <property type="match status" value="1"/>
</dbReference>
<dbReference type="InterPro" id="IPR048268">
    <property type="entry name" value="Arginosuc_syn_C"/>
</dbReference>
<dbReference type="InterPro" id="IPR048267">
    <property type="entry name" value="Arginosuc_syn_N"/>
</dbReference>
<dbReference type="InterPro" id="IPR001518">
    <property type="entry name" value="Arginosuc_synth"/>
</dbReference>
<dbReference type="InterPro" id="IPR018223">
    <property type="entry name" value="Arginosuc_synth_CS"/>
</dbReference>
<dbReference type="InterPro" id="IPR023434">
    <property type="entry name" value="Arginosuc_synth_type_1_subfam"/>
</dbReference>
<dbReference type="InterPro" id="IPR024074">
    <property type="entry name" value="AS_cat/multimer_dom_body"/>
</dbReference>
<dbReference type="InterPro" id="IPR014729">
    <property type="entry name" value="Rossmann-like_a/b/a_fold"/>
</dbReference>
<dbReference type="NCBIfam" id="TIGR00032">
    <property type="entry name" value="argG"/>
    <property type="match status" value="1"/>
</dbReference>
<dbReference type="NCBIfam" id="NF001770">
    <property type="entry name" value="PRK00509.1"/>
    <property type="match status" value="1"/>
</dbReference>
<dbReference type="PANTHER" id="PTHR11587">
    <property type="entry name" value="ARGININOSUCCINATE SYNTHASE"/>
    <property type="match status" value="1"/>
</dbReference>
<dbReference type="PANTHER" id="PTHR11587:SF2">
    <property type="entry name" value="ARGININOSUCCINATE SYNTHASE"/>
    <property type="match status" value="1"/>
</dbReference>
<dbReference type="Pfam" id="PF20979">
    <property type="entry name" value="Arginosuc_syn_C"/>
    <property type="match status" value="1"/>
</dbReference>
<dbReference type="Pfam" id="PF00764">
    <property type="entry name" value="Arginosuc_synth"/>
    <property type="match status" value="1"/>
</dbReference>
<dbReference type="SUPFAM" id="SSF52402">
    <property type="entry name" value="Adenine nucleotide alpha hydrolases-like"/>
    <property type="match status" value="1"/>
</dbReference>
<dbReference type="SUPFAM" id="SSF69864">
    <property type="entry name" value="Argininosuccinate synthetase, C-terminal domain"/>
    <property type="match status" value="1"/>
</dbReference>
<dbReference type="PROSITE" id="PS00564">
    <property type="entry name" value="ARGININOSUCCIN_SYN_1"/>
    <property type="match status" value="1"/>
</dbReference>
<dbReference type="PROSITE" id="PS00565">
    <property type="entry name" value="ARGININOSUCCIN_SYN_2"/>
    <property type="match status" value="1"/>
</dbReference>
<sequence>MSAPKKVVLAYSGGLDTSIILKWLQTEYGCEVVTFTADLGQGEELEPAREKAVMLGIKPENIFIEDVREEFVRDFVFPMFRANALYEGLYLLGTSIARPLIAKRLVEIAAQTGADAVAHGATGKGNDQVRFELTAYALDPAIKVIAPWREWDLTSRTKLLEFAEQNQIPIAKNKRGEAPFSVDANLLHTSSEGRVLENPGEEAPDYVYQRTVDPEKAPDAPEFVEIAFEKGDAVAINGEAMSPATILTKLNELGGKHGVGRLDLVENRFVGMKSRGIYETPGGTILLEAHRGIEQITLDSGAGHLKDSIMPRYAELIYNGFWYSPEREMLQALIDKSQEHVTGTVRVKLYKGFARTVARWSEHSLYSEKHVTFEEDAGAYDQKDAAGFIRLNALRLKLIATRNARVKG</sequence>